<protein>
    <recommendedName>
        <fullName>Netrin receptor UNC5C</fullName>
    </recommendedName>
    <alternativeName>
        <fullName>Protein unc-5 homolog 3</fullName>
        <shortName>cUNC-5H3</shortName>
    </alternativeName>
    <alternativeName>
        <fullName>Protein unc-5 homolog C</fullName>
    </alternativeName>
</protein>
<accession>Q7T2Z5</accession>
<reference key="1">
    <citation type="journal article" date="2003" name="Gene Expr. Patterns">
        <title>Characterization of Netrin-1, Neogenin and cUNC-5H3 expression during chick dorsal root ganglia development.</title>
        <authorList>
            <person name="Guan W."/>
            <person name="Condic M.L."/>
        </authorList>
    </citation>
    <scope>NUCLEOTIDE SEQUENCE [MRNA]</scope>
    <scope>TISSUE SPECIFICITY</scope>
</reference>
<reference key="2">
    <citation type="journal article" date="2017" name="J. Neurosci.">
        <title>Uncoupling of UNC5C with Polymerized TUBB3 in Microtubules Mediates Netrin-1 Repulsion.</title>
        <authorList>
            <person name="Shao Q."/>
            <person name="Yang T."/>
            <person name="Huang H."/>
            <person name="Alarmanazi F."/>
            <person name="Liu G."/>
        </authorList>
    </citation>
    <scope>FUNCTION</scope>
</reference>
<feature type="signal peptide" evidence="5">
    <location>
        <begin position="1"/>
        <end position="39"/>
    </location>
</feature>
<feature type="chain" id="PRO_0000036078" description="Netrin receptor UNC5C">
    <location>
        <begin position="40"/>
        <end position="931"/>
    </location>
</feature>
<feature type="topological domain" description="Extracellular" evidence="5">
    <location>
        <begin position="40"/>
        <end position="380"/>
    </location>
</feature>
<feature type="transmembrane region" description="Helical" evidence="5">
    <location>
        <begin position="381"/>
        <end position="401"/>
    </location>
</feature>
<feature type="topological domain" description="Cytoplasmic" evidence="5">
    <location>
        <begin position="402"/>
        <end position="931"/>
    </location>
</feature>
<feature type="domain" description="Ig-like">
    <location>
        <begin position="62"/>
        <end position="159"/>
    </location>
</feature>
<feature type="domain" description="Ig-like C2-type">
    <location>
        <begin position="161"/>
        <end position="256"/>
    </location>
</feature>
<feature type="domain" description="TSP type-1 1" evidence="6">
    <location>
        <begin position="260"/>
        <end position="314"/>
    </location>
</feature>
<feature type="domain" description="TSP type-1 2" evidence="6">
    <location>
        <begin position="316"/>
        <end position="368"/>
    </location>
</feature>
<feature type="domain" description="ZU5" evidence="7">
    <location>
        <begin position="530"/>
        <end position="664"/>
    </location>
</feature>
<feature type="domain" description="Death">
    <location>
        <begin position="850"/>
        <end position="929"/>
    </location>
</feature>
<feature type="glycosylation site" description="N-linked (GlcNAc...) asparagine" evidence="5">
    <location>
        <position position="236"/>
    </location>
</feature>
<feature type="glycosylation site" description="N-linked (GlcNAc...) asparagine" evidence="5">
    <location>
        <position position="361"/>
    </location>
</feature>
<feature type="disulfide bond" evidence="3">
    <location>
        <begin position="83"/>
        <end position="144"/>
    </location>
</feature>
<feature type="disulfide bond" evidence="3">
    <location>
        <begin position="95"/>
        <end position="142"/>
    </location>
</feature>
<feature type="disulfide bond" evidence="3">
    <location>
        <begin position="188"/>
        <end position="239"/>
    </location>
</feature>
<feature type="disulfide bond" evidence="6">
    <location>
        <begin position="272"/>
        <end position="309"/>
    </location>
</feature>
<feature type="disulfide bond" evidence="6">
    <location>
        <begin position="276"/>
        <end position="313"/>
    </location>
</feature>
<feature type="disulfide bond" evidence="6">
    <location>
        <begin position="287"/>
        <end position="299"/>
    </location>
</feature>
<feature type="disulfide bond" evidence="3">
    <location>
        <begin position="328"/>
        <end position="362"/>
    </location>
</feature>
<feature type="disulfide bond" evidence="3">
    <location>
        <begin position="332"/>
        <end position="367"/>
    </location>
</feature>
<feature type="disulfide bond" evidence="3">
    <location>
        <begin position="340"/>
        <end position="352"/>
    </location>
</feature>
<gene>
    <name type="primary">UNC5C</name>
</gene>
<dbReference type="EMBL" id="AY187310">
    <property type="protein sequence ID" value="AAO67275.1"/>
    <property type="molecule type" value="mRNA"/>
</dbReference>
<dbReference type="RefSeq" id="NP_989782.1">
    <property type="nucleotide sequence ID" value="NM_204451.1"/>
</dbReference>
<dbReference type="SMR" id="Q7T2Z5"/>
<dbReference type="FunCoup" id="Q7T2Z5">
    <property type="interactions" value="171"/>
</dbReference>
<dbReference type="STRING" id="9031.ENSGALP00000036855"/>
<dbReference type="GlyCosmos" id="Q7T2Z5">
    <property type="glycosylation" value="2 sites, No reported glycans"/>
</dbReference>
<dbReference type="GlyGen" id="Q7T2Z5">
    <property type="glycosylation" value="2 sites"/>
</dbReference>
<dbReference type="PaxDb" id="9031-ENSGALP00000036855"/>
<dbReference type="GeneID" id="395101"/>
<dbReference type="KEGG" id="gga:395101"/>
<dbReference type="CTD" id="8633"/>
<dbReference type="VEuPathDB" id="HostDB:geneid_395101"/>
<dbReference type="eggNOG" id="KOG1480">
    <property type="taxonomic scope" value="Eukaryota"/>
</dbReference>
<dbReference type="InParanoid" id="Q7T2Z5"/>
<dbReference type="OrthoDB" id="5973910at2759"/>
<dbReference type="PhylomeDB" id="Q7T2Z5"/>
<dbReference type="PRO" id="PR:Q7T2Z5"/>
<dbReference type="Proteomes" id="UP000000539">
    <property type="component" value="Unassembled WGS sequence"/>
</dbReference>
<dbReference type="GO" id="GO:0009986">
    <property type="term" value="C:cell surface"/>
    <property type="evidence" value="ECO:0007669"/>
    <property type="project" value="UniProtKB-SubCell"/>
</dbReference>
<dbReference type="GO" id="GO:0030425">
    <property type="term" value="C:dendrite"/>
    <property type="evidence" value="ECO:0007669"/>
    <property type="project" value="UniProtKB-SubCell"/>
</dbReference>
<dbReference type="GO" id="GO:0030175">
    <property type="term" value="C:filopodium"/>
    <property type="evidence" value="ECO:0007669"/>
    <property type="project" value="UniProtKB-SubCell"/>
</dbReference>
<dbReference type="GO" id="GO:0030426">
    <property type="term" value="C:growth cone"/>
    <property type="evidence" value="ECO:0007669"/>
    <property type="project" value="UniProtKB-SubCell"/>
</dbReference>
<dbReference type="GO" id="GO:0030027">
    <property type="term" value="C:lamellipodium"/>
    <property type="evidence" value="ECO:0007669"/>
    <property type="project" value="UniProtKB-SubCell"/>
</dbReference>
<dbReference type="GO" id="GO:0005886">
    <property type="term" value="C:plasma membrane"/>
    <property type="evidence" value="ECO:0007669"/>
    <property type="project" value="UniProtKB-SubCell"/>
</dbReference>
<dbReference type="GO" id="GO:0045202">
    <property type="term" value="C:synapse"/>
    <property type="evidence" value="ECO:0007669"/>
    <property type="project" value="UniProtKB-SubCell"/>
</dbReference>
<dbReference type="GO" id="GO:0005042">
    <property type="term" value="F:netrin receptor activity"/>
    <property type="evidence" value="ECO:0000318"/>
    <property type="project" value="GO_Central"/>
</dbReference>
<dbReference type="GO" id="GO:0007411">
    <property type="term" value="P:axon guidance"/>
    <property type="evidence" value="ECO:0000318"/>
    <property type="project" value="GO_Central"/>
</dbReference>
<dbReference type="GO" id="GO:1990791">
    <property type="term" value="P:dorsal root ganglion development"/>
    <property type="evidence" value="ECO:0000315"/>
    <property type="project" value="UniProtKB"/>
</dbReference>
<dbReference type="CDD" id="cd08799">
    <property type="entry name" value="Death_UNC5C"/>
    <property type="match status" value="1"/>
</dbReference>
<dbReference type="FunFam" id="1.10.533.10:FF:000001">
    <property type="entry name" value="Unc-5 netrin receptor B"/>
    <property type="match status" value="1"/>
</dbReference>
<dbReference type="FunFam" id="2.20.100.10:FF:000002">
    <property type="entry name" value="Unc-5 netrin receptor C"/>
    <property type="match status" value="1"/>
</dbReference>
<dbReference type="FunFam" id="2.20.100.10:FF:000008">
    <property type="entry name" value="Unc-5 netrin receptor C"/>
    <property type="match status" value="1"/>
</dbReference>
<dbReference type="FunFam" id="2.60.220.30:FF:000003">
    <property type="entry name" value="Unc-5 netrin receptor C"/>
    <property type="match status" value="1"/>
</dbReference>
<dbReference type="FunFam" id="2.60.40.10:FF:000037">
    <property type="entry name" value="Unc-5 netrin receptor C"/>
    <property type="match status" value="1"/>
</dbReference>
<dbReference type="FunFam" id="2.60.40.10:FF:000039">
    <property type="entry name" value="Unc-5 netrin receptor C"/>
    <property type="match status" value="1"/>
</dbReference>
<dbReference type="Gene3D" id="2.60.220.30">
    <property type="match status" value="1"/>
</dbReference>
<dbReference type="Gene3D" id="1.10.533.10">
    <property type="entry name" value="Death Domain, Fas"/>
    <property type="match status" value="1"/>
</dbReference>
<dbReference type="Gene3D" id="2.60.40.10">
    <property type="entry name" value="Immunoglobulins"/>
    <property type="match status" value="2"/>
</dbReference>
<dbReference type="Gene3D" id="2.20.100.10">
    <property type="entry name" value="Thrombospondin type-1 (TSP1) repeat"/>
    <property type="match status" value="2"/>
</dbReference>
<dbReference type="InterPro" id="IPR011029">
    <property type="entry name" value="DEATH-like_dom_sf"/>
</dbReference>
<dbReference type="InterPro" id="IPR000488">
    <property type="entry name" value="Death_dom"/>
</dbReference>
<dbReference type="InterPro" id="IPR042154">
    <property type="entry name" value="Death_UNC5C"/>
</dbReference>
<dbReference type="InterPro" id="IPR007110">
    <property type="entry name" value="Ig-like_dom"/>
</dbReference>
<dbReference type="InterPro" id="IPR036179">
    <property type="entry name" value="Ig-like_dom_sf"/>
</dbReference>
<dbReference type="InterPro" id="IPR013783">
    <property type="entry name" value="Ig-like_fold"/>
</dbReference>
<dbReference type="InterPro" id="IPR013098">
    <property type="entry name" value="Ig_I-set"/>
</dbReference>
<dbReference type="InterPro" id="IPR003599">
    <property type="entry name" value="Ig_sub"/>
</dbReference>
<dbReference type="InterPro" id="IPR003598">
    <property type="entry name" value="Ig_sub2"/>
</dbReference>
<dbReference type="InterPro" id="IPR000884">
    <property type="entry name" value="TSP1_rpt"/>
</dbReference>
<dbReference type="InterPro" id="IPR036383">
    <property type="entry name" value="TSP1_rpt_sf"/>
</dbReference>
<dbReference type="InterPro" id="IPR037936">
    <property type="entry name" value="UNC5"/>
</dbReference>
<dbReference type="InterPro" id="IPR033772">
    <property type="entry name" value="UPA"/>
</dbReference>
<dbReference type="InterPro" id="IPR000906">
    <property type="entry name" value="ZU5_dom"/>
</dbReference>
<dbReference type="PANTHER" id="PTHR12582">
    <property type="entry name" value="NETRIN RECEPTOR UNC5"/>
    <property type="match status" value="1"/>
</dbReference>
<dbReference type="PANTHER" id="PTHR12582:SF7">
    <property type="entry name" value="NETRIN RECEPTOR UNC5C"/>
    <property type="match status" value="1"/>
</dbReference>
<dbReference type="Pfam" id="PF00531">
    <property type="entry name" value="Death"/>
    <property type="match status" value="1"/>
</dbReference>
<dbReference type="Pfam" id="PF07679">
    <property type="entry name" value="I-set"/>
    <property type="match status" value="1"/>
</dbReference>
<dbReference type="Pfam" id="PF00090">
    <property type="entry name" value="TSP_1"/>
    <property type="match status" value="2"/>
</dbReference>
<dbReference type="Pfam" id="PF17217">
    <property type="entry name" value="UPA"/>
    <property type="match status" value="1"/>
</dbReference>
<dbReference type="Pfam" id="PF00791">
    <property type="entry name" value="ZU5"/>
    <property type="match status" value="1"/>
</dbReference>
<dbReference type="PRINTS" id="PR01705">
    <property type="entry name" value="TSP1REPEAT"/>
</dbReference>
<dbReference type="SMART" id="SM00005">
    <property type="entry name" value="DEATH"/>
    <property type="match status" value="1"/>
</dbReference>
<dbReference type="SMART" id="SM00409">
    <property type="entry name" value="IG"/>
    <property type="match status" value="1"/>
</dbReference>
<dbReference type="SMART" id="SM00408">
    <property type="entry name" value="IGc2"/>
    <property type="match status" value="1"/>
</dbReference>
<dbReference type="SMART" id="SM00209">
    <property type="entry name" value="TSP1"/>
    <property type="match status" value="2"/>
</dbReference>
<dbReference type="SMART" id="SM00218">
    <property type="entry name" value="ZU5"/>
    <property type="match status" value="1"/>
</dbReference>
<dbReference type="SUPFAM" id="SSF47986">
    <property type="entry name" value="DEATH domain"/>
    <property type="match status" value="1"/>
</dbReference>
<dbReference type="SUPFAM" id="SSF48726">
    <property type="entry name" value="Immunoglobulin"/>
    <property type="match status" value="2"/>
</dbReference>
<dbReference type="SUPFAM" id="SSF82895">
    <property type="entry name" value="TSP-1 type 1 repeat"/>
    <property type="match status" value="2"/>
</dbReference>
<dbReference type="PROSITE" id="PS50835">
    <property type="entry name" value="IG_LIKE"/>
    <property type="match status" value="1"/>
</dbReference>
<dbReference type="PROSITE" id="PS50092">
    <property type="entry name" value="TSP1"/>
    <property type="match status" value="2"/>
</dbReference>
<dbReference type="PROSITE" id="PS51145">
    <property type="entry name" value="ZU5"/>
    <property type="match status" value="1"/>
</dbReference>
<proteinExistence type="evidence at transcript level"/>
<sequence>MGKGLEGTAARCGLGMGYLLHSVVLPALAVLGASRPGSAAQDDDFFHELPETFPSDPPEPLPHFLIEPEEAYIVKNKPVNLYCKASPATQIYFKCNSEWVHQKDHVVDERVDETSGLIVCEVSIEISRQQVEELFGPEDYWCQCVAWSSAGTTKSRKAYVRIAYLRKTFEQEPLGKEVSLEQEVLLQCRPPEGIPVAEVEWLKNEEVIDPVEDRNFYITIDHNLIIKQARLSDTANYTCVAKNIVAKRKSTTATVIVYVNGGWSTWTEWSACNSRCGRGFQKRTRTCTNPAPLNGGAFCEGQNVQKIACTTLCPVDGKWTSWSKWSTCGTECTHWRRRECTAPAPKNGGKDCEGLVLQSKNCTDGLCMQAAPDSDDVALYVGIVIAVIVCLAISVVVALFVYRKNHRDFESDIIDSSALNGGFQPVNIKAARQDLLAVPPDLTSAAAMYRGPVYALHDVSDKIPMTNSPILDPLPNLKIKVYNTSGAVTPQDELSDFSSKLSPQITQSLLENETLNVKNQSLARQTDPSCTAFGTFNSLGGHLVIPNSGVSLLIPAGAVPQGRVYEMYVTVHRKEGMRPPVEDSQTLLTPVVSCGPPGALLTRPVVLTMHHCAEPNMDDWQIQLKHQAGQGPWEDVVVVGEENFTTPCYIQLDPEACHILTETLSTYALVGQSITKAAAKRLKLAIFGPLSCSSLEYSIRVYCLDDTQDALKEVLQLERQMGGQLLEEPKTLHFKGSTHNLRLSIHDIAHSLWKSKLPAKYQEIPFYHIWSGCQRNLHCTFTLERFSLNTLELVCKLCVRQVEGEGQIFQLNCSVSEEPTGIDYPIMDSAGSITTIVGPNAFSIPLPIRQKLCSSLDAPQTRGHDWRMLAHKLKLDRYLNYFATKSSPTGVILDLWEAQNFPDGNLSMLAAVLEEMGRHETVVSLAAEGNY</sequence>
<evidence type="ECO:0000250" key="1">
    <source>
        <dbReference type="UniProtKB" id="O08747"/>
    </source>
</evidence>
<evidence type="ECO:0000250" key="2">
    <source>
        <dbReference type="UniProtKB" id="O95185"/>
    </source>
</evidence>
<evidence type="ECO:0000250" key="3">
    <source>
        <dbReference type="UniProtKB" id="Q6ZN44"/>
    </source>
</evidence>
<evidence type="ECO:0000250" key="4">
    <source>
        <dbReference type="UniProtKB" id="Q761X5"/>
    </source>
</evidence>
<evidence type="ECO:0000255" key="5"/>
<evidence type="ECO:0000255" key="6">
    <source>
        <dbReference type="PROSITE-ProRule" id="PRU00210"/>
    </source>
</evidence>
<evidence type="ECO:0000255" key="7">
    <source>
        <dbReference type="PROSITE-ProRule" id="PRU00485"/>
    </source>
</evidence>
<evidence type="ECO:0000269" key="8">
    <source>
    </source>
</evidence>
<evidence type="ECO:0000269" key="9">
    <source>
    </source>
</evidence>
<evidence type="ECO:0000305" key="10"/>
<comment type="function">
    <text evidence="1 9">Receptor for netrin required for axon guidance (By similarity). Mediates axon repulsion of neuronal growth cones in the developing nervous system upon ligand binding (By similarity). Involved in dorsal root ganglion axon projection towards the spinal cord (PubMed:28483977).</text>
</comment>
<comment type="subcellular location">
    <subcellularLocation>
        <location evidence="1">Cell membrane</location>
        <topology evidence="5">Single-pass type I membrane protein</topology>
    </subcellularLocation>
    <subcellularLocation>
        <location evidence="2">Cell surface</location>
    </subcellularLocation>
    <subcellularLocation>
        <location evidence="4">Synapse</location>
        <location evidence="4">Synaptosome</location>
    </subcellularLocation>
    <subcellularLocation>
        <location evidence="1">Cell projection</location>
        <location evidence="1">Axon</location>
    </subcellularLocation>
    <subcellularLocation>
        <location evidence="1">Cell projection</location>
        <location evidence="1">Dendrite</location>
    </subcellularLocation>
    <subcellularLocation>
        <location evidence="1">Cell projection</location>
        <location evidence="1">Growth cone</location>
    </subcellularLocation>
    <subcellularLocation>
        <location evidence="1">Cell projection</location>
        <location evidence="1">Lamellipodium</location>
    </subcellularLocation>
    <subcellularLocation>
        <location evidence="1">Cell projection</location>
        <location evidence="1">Filopodium</location>
    </subcellularLocation>
</comment>
<comment type="tissue specificity">
    <text evidence="8">Restricted to proprioceptive neurons.</text>
</comment>
<comment type="similarity">
    <text evidence="10">Belongs to the unc-5 family.</text>
</comment>
<name>UNC5C_CHICK</name>
<keyword id="KW-1003">Cell membrane</keyword>
<keyword id="KW-0966">Cell projection</keyword>
<keyword id="KW-0217">Developmental protein</keyword>
<keyword id="KW-1015">Disulfide bond</keyword>
<keyword id="KW-0325">Glycoprotein</keyword>
<keyword id="KW-0393">Immunoglobulin domain</keyword>
<keyword id="KW-0472">Membrane</keyword>
<keyword id="KW-0597">Phosphoprotein</keyword>
<keyword id="KW-0675">Receptor</keyword>
<keyword id="KW-1185">Reference proteome</keyword>
<keyword id="KW-0677">Repeat</keyword>
<keyword id="KW-0732">Signal</keyword>
<keyword id="KW-0770">Synapse</keyword>
<keyword id="KW-0771">Synaptosome</keyword>
<keyword id="KW-0812">Transmembrane</keyword>
<keyword id="KW-1133">Transmembrane helix</keyword>
<organism>
    <name type="scientific">Gallus gallus</name>
    <name type="common">Chicken</name>
    <dbReference type="NCBI Taxonomy" id="9031"/>
    <lineage>
        <taxon>Eukaryota</taxon>
        <taxon>Metazoa</taxon>
        <taxon>Chordata</taxon>
        <taxon>Craniata</taxon>
        <taxon>Vertebrata</taxon>
        <taxon>Euteleostomi</taxon>
        <taxon>Archelosauria</taxon>
        <taxon>Archosauria</taxon>
        <taxon>Dinosauria</taxon>
        <taxon>Saurischia</taxon>
        <taxon>Theropoda</taxon>
        <taxon>Coelurosauria</taxon>
        <taxon>Aves</taxon>
        <taxon>Neognathae</taxon>
        <taxon>Galloanserae</taxon>
        <taxon>Galliformes</taxon>
        <taxon>Phasianidae</taxon>
        <taxon>Phasianinae</taxon>
        <taxon>Gallus</taxon>
    </lineage>
</organism>